<name>LEXA_CLOAB</name>
<gene>
    <name evidence="1" type="primary">lexA</name>
    <name type="ordered locus">CA_C1832</name>
</gene>
<keyword id="KW-0068">Autocatalytic cleavage</keyword>
<keyword id="KW-0227">DNA damage</keyword>
<keyword id="KW-0234">DNA repair</keyword>
<keyword id="KW-0235">DNA replication</keyword>
<keyword id="KW-0238">DNA-binding</keyword>
<keyword id="KW-0378">Hydrolase</keyword>
<keyword id="KW-1185">Reference proteome</keyword>
<keyword id="KW-0678">Repressor</keyword>
<keyword id="KW-0742">SOS response</keyword>
<keyword id="KW-0804">Transcription</keyword>
<keyword id="KW-0805">Transcription regulation</keyword>
<proteinExistence type="inferred from homology"/>
<feature type="chain" id="PRO_0000170024" description="LexA repressor">
    <location>
        <begin position="1"/>
        <end position="204"/>
    </location>
</feature>
<feature type="DNA-binding region" description="H-T-H motif" evidence="1">
    <location>
        <begin position="31"/>
        <end position="51"/>
    </location>
</feature>
<feature type="active site" description="For autocatalytic cleavage activity" evidence="1">
    <location>
        <position position="128"/>
    </location>
</feature>
<feature type="active site" description="For autocatalytic cleavage activity" evidence="1">
    <location>
        <position position="165"/>
    </location>
</feature>
<feature type="site" description="Cleavage; by autolysis" evidence="1">
    <location>
        <begin position="92"/>
        <end position="93"/>
    </location>
</feature>
<accession>Q97I23</accession>
<evidence type="ECO:0000255" key="1">
    <source>
        <dbReference type="HAMAP-Rule" id="MF_00015"/>
    </source>
</evidence>
<organism>
    <name type="scientific">Clostridium acetobutylicum (strain ATCC 824 / DSM 792 / JCM 1419 / IAM 19013 / LMG 5710 / NBRC 13948 / NRRL B-527 / VKM B-1787 / 2291 / W)</name>
    <dbReference type="NCBI Taxonomy" id="272562"/>
    <lineage>
        <taxon>Bacteria</taxon>
        <taxon>Bacillati</taxon>
        <taxon>Bacillota</taxon>
        <taxon>Clostridia</taxon>
        <taxon>Eubacteriales</taxon>
        <taxon>Clostridiaceae</taxon>
        <taxon>Clostridium</taxon>
    </lineage>
</organism>
<sequence>MATDKITRDVQSEIYEFIRQEVLDKGYPPSVREICAKVGLSSTSTVHGHLSRLEKKGLIRRDPTKPRAIELIKDPISKREMIDIPIVGKVQAGQPILAVENIDDYLTIPLNFVRNTNDLFILKISGNSMIEAGIYDGDLAIIEKTNYAQNGDIVVALIENDATIKRFFKEKDKIRLQPENHTMDPIIVDNCEVIGKLAGIYRRY</sequence>
<comment type="function">
    <text evidence="1">Represses a number of genes involved in the response to DNA damage (SOS response), including recA and lexA. In the presence of single-stranded DNA, RecA interacts with LexA causing an autocatalytic cleavage which disrupts the DNA-binding part of LexA, leading to derepression of the SOS regulon and eventually DNA repair.</text>
</comment>
<comment type="catalytic activity">
    <reaction evidence="1">
        <text>Hydrolysis of Ala-|-Gly bond in repressor LexA.</text>
        <dbReference type="EC" id="3.4.21.88"/>
    </reaction>
</comment>
<comment type="subunit">
    <text evidence="1">Homodimer.</text>
</comment>
<comment type="similarity">
    <text evidence="1">Belongs to the peptidase S24 family.</text>
</comment>
<dbReference type="EC" id="3.4.21.88" evidence="1"/>
<dbReference type="EMBL" id="AE001437">
    <property type="protein sequence ID" value="AAK79796.1"/>
    <property type="molecule type" value="Genomic_DNA"/>
</dbReference>
<dbReference type="PIR" id="A97126">
    <property type="entry name" value="A97126"/>
</dbReference>
<dbReference type="RefSeq" id="NP_348456.1">
    <property type="nucleotide sequence ID" value="NC_003030.1"/>
</dbReference>
<dbReference type="RefSeq" id="WP_010965137.1">
    <property type="nucleotide sequence ID" value="NC_003030.1"/>
</dbReference>
<dbReference type="SMR" id="Q97I23"/>
<dbReference type="STRING" id="272562.CA_C1832"/>
<dbReference type="MEROPS" id="S24.001"/>
<dbReference type="GeneID" id="44998325"/>
<dbReference type="KEGG" id="cac:CA_C1832"/>
<dbReference type="PATRIC" id="fig|272562.8.peg.2037"/>
<dbReference type="eggNOG" id="COG1974">
    <property type="taxonomic scope" value="Bacteria"/>
</dbReference>
<dbReference type="HOGENOM" id="CLU_066192_45_1_9"/>
<dbReference type="OrthoDB" id="9802364at2"/>
<dbReference type="Proteomes" id="UP000000814">
    <property type="component" value="Chromosome"/>
</dbReference>
<dbReference type="GO" id="GO:0003677">
    <property type="term" value="F:DNA binding"/>
    <property type="evidence" value="ECO:0007669"/>
    <property type="project" value="UniProtKB-UniRule"/>
</dbReference>
<dbReference type="GO" id="GO:0004252">
    <property type="term" value="F:serine-type endopeptidase activity"/>
    <property type="evidence" value="ECO:0007669"/>
    <property type="project" value="UniProtKB-UniRule"/>
</dbReference>
<dbReference type="GO" id="GO:0006281">
    <property type="term" value="P:DNA repair"/>
    <property type="evidence" value="ECO:0007669"/>
    <property type="project" value="UniProtKB-UniRule"/>
</dbReference>
<dbReference type="GO" id="GO:0006260">
    <property type="term" value="P:DNA replication"/>
    <property type="evidence" value="ECO:0007669"/>
    <property type="project" value="UniProtKB-UniRule"/>
</dbReference>
<dbReference type="GO" id="GO:0045892">
    <property type="term" value="P:negative regulation of DNA-templated transcription"/>
    <property type="evidence" value="ECO:0007669"/>
    <property type="project" value="UniProtKB-UniRule"/>
</dbReference>
<dbReference type="GO" id="GO:0006508">
    <property type="term" value="P:proteolysis"/>
    <property type="evidence" value="ECO:0007669"/>
    <property type="project" value="InterPro"/>
</dbReference>
<dbReference type="GO" id="GO:0009432">
    <property type="term" value="P:SOS response"/>
    <property type="evidence" value="ECO:0007669"/>
    <property type="project" value="UniProtKB-UniRule"/>
</dbReference>
<dbReference type="CDD" id="cd00090">
    <property type="entry name" value="HTH_ARSR"/>
    <property type="match status" value="1"/>
</dbReference>
<dbReference type="CDD" id="cd06529">
    <property type="entry name" value="S24_LexA-like"/>
    <property type="match status" value="1"/>
</dbReference>
<dbReference type="FunFam" id="1.10.10.10:FF:000009">
    <property type="entry name" value="LexA repressor"/>
    <property type="match status" value="1"/>
</dbReference>
<dbReference type="FunFam" id="2.10.109.10:FF:000001">
    <property type="entry name" value="LexA repressor"/>
    <property type="match status" value="1"/>
</dbReference>
<dbReference type="Gene3D" id="2.10.109.10">
    <property type="entry name" value="Umud Fragment, subunit A"/>
    <property type="match status" value="1"/>
</dbReference>
<dbReference type="Gene3D" id="1.10.10.10">
    <property type="entry name" value="Winged helix-like DNA-binding domain superfamily/Winged helix DNA-binding domain"/>
    <property type="match status" value="1"/>
</dbReference>
<dbReference type="HAMAP" id="MF_00015">
    <property type="entry name" value="LexA"/>
    <property type="match status" value="1"/>
</dbReference>
<dbReference type="InterPro" id="IPR011991">
    <property type="entry name" value="ArsR-like_HTH"/>
</dbReference>
<dbReference type="InterPro" id="IPR006200">
    <property type="entry name" value="LexA"/>
</dbReference>
<dbReference type="InterPro" id="IPR039418">
    <property type="entry name" value="LexA-like"/>
</dbReference>
<dbReference type="InterPro" id="IPR036286">
    <property type="entry name" value="LexA/Signal_pep-like_sf"/>
</dbReference>
<dbReference type="InterPro" id="IPR006199">
    <property type="entry name" value="LexA_DNA-bd_dom"/>
</dbReference>
<dbReference type="InterPro" id="IPR050077">
    <property type="entry name" value="LexA_repressor"/>
</dbReference>
<dbReference type="InterPro" id="IPR006197">
    <property type="entry name" value="Peptidase_S24_LexA"/>
</dbReference>
<dbReference type="InterPro" id="IPR015927">
    <property type="entry name" value="Peptidase_S24_S26A/B/C"/>
</dbReference>
<dbReference type="InterPro" id="IPR036388">
    <property type="entry name" value="WH-like_DNA-bd_sf"/>
</dbReference>
<dbReference type="InterPro" id="IPR036390">
    <property type="entry name" value="WH_DNA-bd_sf"/>
</dbReference>
<dbReference type="NCBIfam" id="TIGR00498">
    <property type="entry name" value="lexA"/>
    <property type="match status" value="1"/>
</dbReference>
<dbReference type="PANTHER" id="PTHR33516">
    <property type="entry name" value="LEXA REPRESSOR"/>
    <property type="match status" value="1"/>
</dbReference>
<dbReference type="PANTHER" id="PTHR33516:SF2">
    <property type="entry name" value="LEXA REPRESSOR-RELATED"/>
    <property type="match status" value="1"/>
</dbReference>
<dbReference type="Pfam" id="PF01726">
    <property type="entry name" value="LexA_DNA_bind"/>
    <property type="match status" value="1"/>
</dbReference>
<dbReference type="Pfam" id="PF00717">
    <property type="entry name" value="Peptidase_S24"/>
    <property type="match status" value="1"/>
</dbReference>
<dbReference type="PRINTS" id="PR00726">
    <property type="entry name" value="LEXASERPTASE"/>
</dbReference>
<dbReference type="SUPFAM" id="SSF51306">
    <property type="entry name" value="LexA/Signal peptidase"/>
    <property type="match status" value="1"/>
</dbReference>
<dbReference type="SUPFAM" id="SSF46785">
    <property type="entry name" value="Winged helix' DNA-binding domain"/>
    <property type="match status" value="1"/>
</dbReference>
<protein>
    <recommendedName>
        <fullName evidence="1">LexA repressor</fullName>
        <ecNumber evidence="1">3.4.21.88</ecNumber>
    </recommendedName>
</protein>
<reference key="1">
    <citation type="journal article" date="2001" name="J. Bacteriol.">
        <title>Genome sequence and comparative analysis of the solvent-producing bacterium Clostridium acetobutylicum.</title>
        <authorList>
            <person name="Noelling J."/>
            <person name="Breton G."/>
            <person name="Omelchenko M.V."/>
            <person name="Makarova K.S."/>
            <person name="Zeng Q."/>
            <person name="Gibson R."/>
            <person name="Lee H.M."/>
            <person name="Dubois J."/>
            <person name="Qiu D."/>
            <person name="Hitti J."/>
            <person name="Wolf Y.I."/>
            <person name="Tatusov R.L."/>
            <person name="Sabathe F."/>
            <person name="Doucette-Stamm L.A."/>
            <person name="Soucaille P."/>
            <person name="Daly M.J."/>
            <person name="Bennett G.N."/>
            <person name="Koonin E.V."/>
            <person name="Smith D.R."/>
        </authorList>
    </citation>
    <scope>NUCLEOTIDE SEQUENCE [LARGE SCALE GENOMIC DNA]</scope>
    <source>
        <strain>ATCC 824 / DSM 792 / JCM 1419 / IAM 19013 / LMG 5710 / NBRC 13948 / NRRL B-527 / VKM B-1787 / 2291 / W</strain>
    </source>
</reference>